<name>ATP6_CANAL</name>
<geneLocation type="mitochondrion"/>
<keyword id="KW-0066">ATP synthesis</keyword>
<keyword id="KW-0138">CF(0)</keyword>
<keyword id="KW-0375">Hydrogen ion transport</keyword>
<keyword id="KW-0406">Ion transport</keyword>
<keyword id="KW-0472">Membrane</keyword>
<keyword id="KW-0496">Mitochondrion</keyword>
<keyword id="KW-0999">Mitochondrion inner membrane</keyword>
<keyword id="KW-1185">Reference proteome</keyword>
<keyword id="KW-0812">Transmembrane</keyword>
<keyword id="KW-1133">Transmembrane helix</keyword>
<keyword id="KW-0813">Transport</keyword>
<protein>
    <recommendedName>
        <fullName>ATP synthase subunit a</fullName>
    </recommendedName>
    <alternativeName>
        <fullName>ATP synthase subunit 6</fullName>
    </alternativeName>
    <alternativeName>
        <fullName>F-ATPase protein 6</fullName>
    </alternativeName>
</protein>
<comment type="function">
    <text evidence="1">Mitochondrial membrane ATP synthase (F(1)F(0) ATP synthase or Complex V) produces ATP from ADP in the presence of a proton gradient across the membrane which is generated by electron transport complexes of the respiratory chain. F-type ATPases consist of two structural domains, F(1) - containing the extramembraneous catalytic core and F(0) - containing the membrane proton channel, linked together by a central stalk and a peripheral stalk. During catalysis, ATP synthesis in the catalytic domain of F(1) is coupled via a rotary mechanism of the central stalk subunits to proton translocation. Key component of the proton channel; it may play a direct role in the translocation of protons across the membrane (By similarity).</text>
</comment>
<comment type="subunit">
    <text evidence="1">F-type ATPases have 2 components, CF(1) - the catalytic core - and CF(0) - the membrane proton channel. CF(1) has five subunits: alpha(3), beta(3), gamma(1), delta(1), epsilon(1). CF(0) has three main subunits: a, b and c (By similarity).</text>
</comment>
<comment type="subcellular location">
    <subcellularLocation>
        <location evidence="1">Mitochondrion inner membrane</location>
        <topology evidence="1">Multi-pass membrane protein</topology>
    </subcellularLocation>
</comment>
<comment type="similarity">
    <text evidence="3">Belongs to the ATPase A chain family.</text>
</comment>
<reference key="1">
    <citation type="journal article" date="2001" name="J. Bacteriol.">
        <title>Infrequent genetic exchange and recombination in the mitochondrial genome of Candida albicans.</title>
        <authorList>
            <person name="Anderson J.B."/>
            <person name="Wickens C."/>
            <person name="Khan M."/>
            <person name="Cowen L.E."/>
            <person name="Federspiel N.A."/>
            <person name="Jones T."/>
            <person name="Kohn L.M."/>
        </authorList>
    </citation>
    <scope>NUCLEOTIDE SEQUENCE [LARGE SCALE GENOMIC DNA]</scope>
    <source>
        <strain>SC5314 / ATCC MYA-2876</strain>
    </source>
</reference>
<feature type="propeptide" id="PRO_0000356862" description="Removed in mature form" evidence="1">
    <location>
        <begin position="1"/>
        <end position="3"/>
    </location>
</feature>
<feature type="chain" id="PRO_0000356863" description="ATP synthase subunit a">
    <location>
        <begin position="4"/>
        <end position="246"/>
    </location>
</feature>
<feature type="transmembrane region" description="Helical" evidence="2">
    <location>
        <begin position="20"/>
        <end position="40"/>
    </location>
</feature>
<feature type="transmembrane region" description="Helical" evidence="2">
    <location>
        <begin position="56"/>
        <end position="76"/>
    </location>
</feature>
<feature type="transmembrane region" description="Helical" evidence="2">
    <location>
        <begin position="82"/>
        <end position="102"/>
    </location>
</feature>
<feature type="transmembrane region" description="Helical" evidence="2">
    <location>
        <begin position="112"/>
        <end position="132"/>
    </location>
</feature>
<feature type="transmembrane region" description="Helical" evidence="2">
    <location>
        <begin position="138"/>
        <end position="158"/>
    </location>
</feature>
<feature type="transmembrane region" description="Helical" evidence="2">
    <location>
        <begin position="176"/>
        <end position="196"/>
    </location>
</feature>
<feature type="transmembrane region" description="Helical" evidence="2">
    <location>
        <begin position="203"/>
        <end position="223"/>
    </location>
</feature>
<accession>Q9B8D4</accession>
<sequence length="246" mass="26568">MFYSPLDQFEIKPLLMVNNILTLALTNYTLYLIIVVSIIFGYTSIISNGRLGSTRWGVAIIAIYDTILNLVYSQIGKAGGHFFPLIFTIFNLIFAANLISMIPYSFAISAQLVAIVSFSLALWIGNVILGLYLHGWGFFALFVPSGTPLPLVPILVLIEALSYSSRAISLGLRLGANILSGHLLMLILGSLIVNLMSSSILGFIGGIVPIVAVIAITILEVGIAIIQAYVFSILLSGYIKDSVSLH</sequence>
<dbReference type="EMBL" id="AF285261">
    <property type="protein sequence ID" value="AAG59592.2"/>
    <property type="molecule type" value="Genomic_DNA"/>
</dbReference>
<dbReference type="RefSeq" id="NP_075035.2">
    <property type="nucleotide sequence ID" value="NC_002653.1"/>
</dbReference>
<dbReference type="SMR" id="Q9B8D4"/>
<dbReference type="FunCoup" id="Q9B8D4">
    <property type="interactions" value="263"/>
</dbReference>
<dbReference type="STRING" id="237561.Q9B8D4"/>
<dbReference type="EnsemblFungi" id="CM_00160C-T">
    <property type="protein sequence ID" value="CM_00160C-T-p1"/>
    <property type="gene ID" value="CM_00160C"/>
</dbReference>
<dbReference type="GeneID" id="802560"/>
<dbReference type="KEGG" id="cal:CaalfMp06"/>
<dbReference type="CGD" id="CAL0000195054">
    <property type="gene designation" value="ATP6"/>
</dbReference>
<dbReference type="VEuPathDB" id="FungiDB:CM_00160C"/>
<dbReference type="InParanoid" id="Q9B8D4"/>
<dbReference type="Proteomes" id="UP000000559">
    <property type="component" value="Mitochondrion"/>
</dbReference>
<dbReference type="GO" id="GO:0005743">
    <property type="term" value="C:mitochondrial inner membrane"/>
    <property type="evidence" value="ECO:0007669"/>
    <property type="project" value="UniProtKB-SubCell"/>
</dbReference>
<dbReference type="GO" id="GO:0045259">
    <property type="term" value="C:proton-transporting ATP synthase complex"/>
    <property type="evidence" value="ECO:0000250"/>
    <property type="project" value="CGD"/>
</dbReference>
<dbReference type="GO" id="GO:0046933">
    <property type="term" value="F:proton-transporting ATP synthase activity, rotational mechanism"/>
    <property type="evidence" value="ECO:0000250"/>
    <property type="project" value="CGD"/>
</dbReference>
<dbReference type="GO" id="GO:0015986">
    <property type="term" value="P:proton motive force-driven ATP synthesis"/>
    <property type="evidence" value="ECO:0000250"/>
    <property type="project" value="CGD"/>
</dbReference>
<dbReference type="CDD" id="cd00310">
    <property type="entry name" value="ATP-synt_Fo_a_6"/>
    <property type="match status" value="1"/>
</dbReference>
<dbReference type="FunFam" id="1.20.120.220:FF:000003">
    <property type="entry name" value="ATP synthase subunit a"/>
    <property type="match status" value="1"/>
</dbReference>
<dbReference type="Gene3D" id="1.20.120.220">
    <property type="entry name" value="ATP synthase, F0 complex, subunit A"/>
    <property type="match status" value="1"/>
</dbReference>
<dbReference type="HAMAP" id="MF_01393">
    <property type="entry name" value="ATP_synth_a_bact"/>
    <property type="match status" value="1"/>
</dbReference>
<dbReference type="InterPro" id="IPR000568">
    <property type="entry name" value="ATP_synth_F0_asu"/>
</dbReference>
<dbReference type="InterPro" id="IPR023011">
    <property type="entry name" value="ATP_synth_F0_asu_AS"/>
</dbReference>
<dbReference type="InterPro" id="IPR045083">
    <property type="entry name" value="ATP_synth_F0_asu_bact/mt"/>
</dbReference>
<dbReference type="InterPro" id="IPR035908">
    <property type="entry name" value="F0_ATP_A_sf"/>
</dbReference>
<dbReference type="NCBIfam" id="TIGR01131">
    <property type="entry name" value="ATP_synt_6_or_A"/>
    <property type="match status" value="1"/>
</dbReference>
<dbReference type="PANTHER" id="PTHR11410">
    <property type="entry name" value="ATP SYNTHASE SUBUNIT A"/>
    <property type="match status" value="1"/>
</dbReference>
<dbReference type="PANTHER" id="PTHR11410:SF0">
    <property type="entry name" value="ATP SYNTHASE SUBUNIT A"/>
    <property type="match status" value="1"/>
</dbReference>
<dbReference type="Pfam" id="PF00119">
    <property type="entry name" value="ATP-synt_A"/>
    <property type="match status" value="1"/>
</dbReference>
<dbReference type="PRINTS" id="PR00123">
    <property type="entry name" value="ATPASEA"/>
</dbReference>
<dbReference type="SUPFAM" id="SSF81336">
    <property type="entry name" value="F1F0 ATP synthase subunit A"/>
    <property type="match status" value="1"/>
</dbReference>
<dbReference type="PROSITE" id="PS00449">
    <property type="entry name" value="ATPASE_A"/>
    <property type="match status" value="1"/>
</dbReference>
<proteinExistence type="inferred from homology"/>
<organism>
    <name type="scientific">Candida albicans (strain SC5314 / ATCC MYA-2876)</name>
    <name type="common">Yeast</name>
    <dbReference type="NCBI Taxonomy" id="237561"/>
    <lineage>
        <taxon>Eukaryota</taxon>
        <taxon>Fungi</taxon>
        <taxon>Dikarya</taxon>
        <taxon>Ascomycota</taxon>
        <taxon>Saccharomycotina</taxon>
        <taxon>Pichiomycetes</taxon>
        <taxon>Debaryomycetaceae</taxon>
        <taxon>Candida/Lodderomyces clade</taxon>
        <taxon>Candida</taxon>
    </lineage>
</organism>
<evidence type="ECO:0000250" key="1"/>
<evidence type="ECO:0000255" key="2"/>
<evidence type="ECO:0000305" key="3"/>
<evidence type="ECO:0000312" key="4">
    <source>
        <dbReference type="CGD" id="CAL0000195054"/>
    </source>
</evidence>
<gene>
    <name type="primary">ATP6</name>
    <name evidence="4" type="ordered locus">CM_00160C</name>
    <name type="ORF">CaalfMp06</name>
</gene>